<proteinExistence type="inferred from homology"/>
<organism>
    <name type="scientific">Rhodospirillum rubrum (strain ATCC 11170 / ATH 1.1.1 / DSM 467 / LMG 4362 / NCIMB 8255 / S1)</name>
    <dbReference type="NCBI Taxonomy" id="269796"/>
    <lineage>
        <taxon>Bacteria</taxon>
        <taxon>Pseudomonadati</taxon>
        <taxon>Pseudomonadota</taxon>
        <taxon>Alphaproteobacteria</taxon>
        <taxon>Rhodospirillales</taxon>
        <taxon>Rhodospirillaceae</taxon>
        <taxon>Rhodospirillum</taxon>
    </lineage>
</organism>
<gene>
    <name type="ordered locus">Rru_A3059</name>
</gene>
<name>Y3059_RHORT</name>
<protein>
    <recommendedName>
        <fullName evidence="1">UPF0301 protein Rru_A3059</fullName>
    </recommendedName>
</protein>
<reference key="1">
    <citation type="journal article" date="2011" name="Stand. Genomic Sci.">
        <title>Complete genome sequence of Rhodospirillum rubrum type strain (S1).</title>
        <authorList>
            <person name="Munk A.C."/>
            <person name="Copeland A."/>
            <person name="Lucas S."/>
            <person name="Lapidus A."/>
            <person name="Del Rio T.G."/>
            <person name="Barry K."/>
            <person name="Detter J.C."/>
            <person name="Hammon N."/>
            <person name="Israni S."/>
            <person name="Pitluck S."/>
            <person name="Brettin T."/>
            <person name="Bruce D."/>
            <person name="Han C."/>
            <person name="Tapia R."/>
            <person name="Gilna P."/>
            <person name="Schmutz J."/>
            <person name="Larimer F."/>
            <person name="Land M."/>
            <person name="Kyrpides N.C."/>
            <person name="Mavromatis K."/>
            <person name="Richardson P."/>
            <person name="Rohde M."/>
            <person name="Goeker M."/>
            <person name="Klenk H.P."/>
            <person name="Zhang Y."/>
            <person name="Roberts G.P."/>
            <person name="Reslewic S."/>
            <person name="Schwartz D.C."/>
        </authorList>
    </citation>
    <scope>NUCLEOTIDE SEQUENCE [LARGE SCALE GENOMIC DNA]</scope>
    <source>
        <strain>ATCC 11170 / ATH 1.1.1 / DSM 467 / LMG 4362 / NCIMB 8255 / S1</strain>
    </source>
</reference>
<comment type="similarity">
    <text evidence="1">Belongs to the UPF0301 (AlgH) family.</text>
</comment>
<comment type="sequence caution" evidence="2">
    <conflict type="erroneous initiation">
        <sequence resource="EMBL-CDS" id="ABC23854"/>
    </conflict>
</comment>
<evidence type="ECO:0000255" key="1">
    <source>
        <dbReference type="HAMAP-Rule" id="MF_00758"/>
    </source>
</evidence>
<evidence type="ECO:0000305" key="2"/>
<feature type="chain" id="PRO_0000258872" description="UPF0301 protein Rru_A3059">
    <location>
        <begin position="1"/>
        <end position="192"/>
    </location>
</feature>
<sequence length="192" mass="20563">MPTLLQKHEGYLTGHCLVAMPGMGDPRFEGTVIYLCAHTAEGAMGIVINRELEEISFPDIVGQLGIQPTPFCDDVRVQFGGPVETGRGFVLHTSDYQNEGTLSVDDSMALTATLDVLRAIASGDGPMRVIMALGYAGWGAGQLDGELKGNVWLTVPADRQLVFETAVKDKYTTAMGRLGIDPRLLSENAGHA</sequence>
<accession>Q2RPU1</accession>
<dbReference type="EMBL" id="CP000230">
    <property type="protein sequence ID" value="ABC23854.1"/>
    <property type="status" value="ALT_INIT"/>
    <property type="molecule type" value="Genomic_DNA"/>
</dbReference>
<dbReference type="RefSeq" id="WP_042440210.1">
    <property type="nucleotide sequence ID" value="NC_007643.1"/>
</dbReference>
<dbReference type="RefSeq" id="YP_428141.1">
    <property type="nucleotide sequence ID" value="NC_007643.1"/>
</dbReference>
<dbReference type="SMR" id="Q2RPU1"/>
<dbReference type="STRING" id="269796.Rru_A3059"/>
<dbReference type="EnsemblBacteria" id="ABC23854">
    <property type="protein sequence ID" value="ABC23854"/>
    <property type="gene ID" value="Rru_A3059"/>
</dbReference>
<dbReference type="KEGG" id="rru:Rru_A3059"/>
<dbReference type="PATRIC" id="fig|269796.9.peg.3170"/>
<dbReference type="eggNOG" id="COG1678">
    <property type="taxonomic scope" value="Bacteria"/>
</dbReference>
<dbReference type="HOGENOM" id="CLU_057596_1_0_5"/>
<dbReference type="PhylomeDB" id="Q2RPU1"/>
<dbReference type="Proteomes" id="UP000001929">
    <property type="component" value="Chromosome"/>
</dbReference>
<dbReference type="GO" id="GO:0005829">
    <property type="term" value="C:cytosol"/>
    <property type="evidence" value="ECO:0007669"/>
    <property type="project" value="TreeGrafter"/>
</dbReference>
<dbReference type="Gene3D" id="3.40.1740.10">
    <property type="entry name" value="VC0467-like"/>
    <property type="match status" value="1"/>
</dbReference>
<dbReference type="HAMAP" id="MF_00758">
    <property type="entry name" value="UPF0301"/>
    <property type="match status" value="1"/>
</dbReference>
<dbReference type="InterPro" id="IPR003774">
    <property type="entry name" value="AlgH-like"/>
</dbReference>
<dbReference type="NCBIfam" id="NF001268">
    <property type="entry name" value="PRK00228.1-4"/>
    <property type="match status" value="1"/>
</dbReference>
<dbReference type="PANTHER" id="PTHR30327">
    <property type="entry name" value="UNCHARACTERIZED PROTEIN YQGE"/>
    <property type="match status" value="1"/>
</dbReference>
<dbReference type="PANTHER" id="PTHR30327:SF1">
    <property type="entry name" value="UPF0301 PROTEIN YQGE"/>
    <property type="match status" value="1"/>
</dbReference>
<dbReference type="Pfam" id="PF02622">
    <property type="entry name" value="DUF179"/>
    <property type="match status" value="1"/>
</dbReference>
<dbReference type="SUPFAM" id="SSF143456">
    <property type="entry name" value="VC0467-like"/>
    <property type="match status" value="1"/>
</dbReference>
<keyword id="KW-1185">Reference proteome</keyword>